<geneLocation type="mitochondrion"/>
<proteinExistence type="inferred from homology"/>
<name>CYB_PTEHY</name>
<protein>
    <recommendedName>
        <fullName>Cytochrome b</fullName>
    </recommendedName>
    <alternativeName>
        <fullName>Complex III subunit 3</fullName>
    </alternativeName>
    <alternativeName>
        <fullName>Complex III subunit III</fullName>
    </alternativeName>
    <alternativeName>
        <fullName>Cytochrome b-c1 complex subunit 3</fullName>
    </alternativeName>
    <alternativeName>
        <fullName>Ubiquinol-cytochrome-c reductase complex cytochrome b subunit</fullName>
    </alternativeName>
</protein>
<comment type="function">
    <text evidence="2">Component of the ubiquinol-cytochrome c reductase complex (complex III or cytochrome b-c1 complex) that is part of the mitochondrial respiratory chain. The b-c1 complex mediates electron transfer from ubiquinol to cytochrome c. Contributes to the generation of a proton gradient across the mitochondrial membrane that is then used for ATP synthesis.</text>
</comment>
<comment type="cofactor">
    <cofactor evidence="2">
        <name>heme b</name>
        <dbReference type="ChEBI" id="CHEBI:60344"/>
    </cofactor>
    <text evidence="2">Binds 2 heme b groups non-covalently.</text>
</comment>
<comment type="subunit">
    <text evidence="2">The cytochrome bc1 complex contains 11 subunits: 3 respiratory subunits (MT-CYB, CYC1 and UQCRFS1), 2 core proteins (UQCRC1 and UQCRC2) and 6 low-molecular weight proteins (UQCRH/QCR6, UQCRB/QCR7, UQCRQ/QCR8, UQCR10/QCR9, UQCR11/QCR10 and a cleavage product of UQCRFS1). This cytochrome bc1 complex then forms a dimer.</text>
</comment>
<comment type="subcellular location">
    <subcellularLocation>
        <location evidence="2">Mitochondrion inner membrane</location>
        <topology evidence="2">Multi-pass membrane protein</topology>
    </subcellularLocation>
</comment>
<comment type="miscellaneous">
    <text evidence="1">Heme 1 (or BL or b562) is low-potential and absorbs at about 562 nm, and heme 2 (or BH or b566) is high-potential and absorbs at about 566 nm.</text>
</comment>
<comment type="similarity">
    <text evidence="3 4">Belongs to the cytochrome b family.</text>
</comment>
<comment type="caution">
    <text evidence="2">The full-length protein contains only eight transmembrane helices, not nine as predicted by bioinformatics tools.</text>
</comment>
<organism>
    <name type="scientific">Pterodroma hypoleuca</name>
    <name type="common">Bonin petrel</name>
    <dbReference type="NCBI Taxonomy" id="79640"/>
    <lineage>
        <taxon>Eukaryota</taxon>
        <taxon>Metazoa</taxon>
        <taxon>Chordata</taxon>
        <taxon>Craniata</taxon>
        <taxon>Vertebrata</taxon>
        <taxon>Euteleostomi</taxon>
        <taxon>Archelosauria</taxon>
        <taxon>Archosauria</taxon>
        <taxon>Dinosauria</taxon>
        <taxon>Saurischia</taxon>
        <taxon>Theropoda</taxon>
        <taxon>Coelurosauria</taxon>
        <taxon>Aves</taxon>
        <taxon>Neognathae</taxon>
        <taxon>Neoaves</taxon>
        <taxon>Aequornithes</taxon>
        <taxon>Procellariiformes</taxon>
        <taxon>Procellariidae</taxon>
        <taxon>Pterodroma</taxon>
    </lineage>
</organism>
<feature type="chain" id="PRO_0000061460" description="Cytochrome b">
    <location>
        <begin position="1"/>
        <end position="380"/>
    </location>
</feature>
<feature type="transmembrane region" description="Helical" evidence="2">
    <location>
        <begin position="34"/>
        <end position="54"/>
    </location>
</feature>
<feature type="transmembrane region" description="Helical" evidence="2">
    <location>
        <begin position="78"/>
        <end position="99"/>
    </location>
</feature>
<feature type="transmembrane region" description="Helical" evidence="2">
    <location>
        <begin position="114"/>
        <end position="134"/>
    </location>
</feature>
<feature type="transmembrane region" description="Helical" evidence="2">
    <location>
        <begin position="179"/>
        <end position="199"/>
    </location>
</feature>
<feature type="transmembrane region" description="Helical" evidence="2">
    <location>
        <begin position="227"/>
        <end position="247"/>
    </location>
</feature>
<feature type="transmembrane region" description="Helical" evidence="2">
    <location>
        <begin position="289"/>
        <end position="309"/>
    </location>
</feature>
<feature type="transmembrane region" description="Helical" evidence="2">
    <location>
        <begin position="321"/>
        <end position="341"/>
    </location>
</feature>
<feature type="transmembrane region" description="Helical" evidence="2">
    <location>
        <begin position="348"/>
        <end position="368"/>
    </location>
</feature>
<feature type="binding site" description="axial binding residue" evidence="2">
    <location>
        <position position="84"/>
    </location>
    <ligand>
        <name>heme b</name>
        <dbReference type="ChEBI" id="CHEBI:60344"/>
        <label>b562</label>
    </ligand>
    <ligandPart>
        <name>Fe</name>
        <dbReference type="ChEBI" id="CHEBI:18248"/>
    </ligandPart>
</feature>
<feature type="binding site" description="axial binding residue" evidence="2">
    <location>
        <position position="98"/>
    </location>
    <ligand>
        <name>heme b</name>
        <dbReference type="ChEBI" id="CHEBI:60344"/>
        <label>b566</label>
    </ligand>
    <ligandPart>
        <name>Fe</name>
        <dbReference type="ChEBI" id="CHEBI:18248"/>
    </ligandPart>
</feature>
<feature type="binding site" description="axial binding residue" evidence="2">
    <location>
        <position position="183"/>
    </location>
    <ligand>
        <name>heme b</name>
        <dbReference type="ChEBI" id="CHEBI:60344"/>
        <label>b562</label>
    </ligand>
    <ligandPart>
        <name>Fe</name>
        <dbReference type="ChEBI" id="CHEBI:18248"/>
    </ligandPart>
</feature>
<feature type="binding site" description="axial binding residue" evidence="2">
    <location>
        <position position="197"/>
    </location>
    <ligand>
        <name>heme b</name>
        <dbReference type="ChEBI" id="CHEBI:60344"/>
        <label>b566</label>
    </ligand>
    <ligandPart>
        <name>Fe</name>
        <dbReference type="ChEBI" id="CHEBI:18248"/>
    </ligandPart>
</feature>
<feature type="binding site" evidence="2">
    <location>
        <position position="202"/>
    </location>
    <ligand>
        <name>a ubiquinone</name>
        <dbReference type="ChEBI" id="CHEBI:16389"/>
    </ligand>
</feature>
<accession>O79224</accession>
<evidence type="ECO:0000250" key="1"/>
<evidence type="ECO:0000250" key="2">
    <source>
        <dbReference type="UniProtKB" id="P00157"/>
    </source>
</evidence>
<evidence type="ECO:0000255" key="3">
    <source>
        <dbReference type="PROSITE-ProRule" id="PRU00967"/>
    </source>
</evidence>
<evidence type="ECO:0000255" key="4">
    <source>
        <dbReference type="PROSITE-ProRule" id="PRU00968"/>
    </source>
</evidence>
<gene>
    <name type="primary">MT-CYB</name>
    <name type="synonym">COB</name>
    <name type="synonym">CYTB</name>
    <name type="synonym">MTCYB</name>
</gene>
<sequence length="380" mass="42669">MAPNLRKSHPLLKMVNNSLIDLPAPSNISAWWNFGSLLGICLMTQILTGLLLAMHYTADTTLAFSSVAHTCRNVQYGWLIRNLHANGASFFFICIYLHIGRGFYYGSYLYKETWNTGVMLLLTLMATAFVGYVLPWGQMSFWGATVITNLFSAIPYIGQTLVEWAWGGFSVDNPTLTRFFALHFLLPFVIAGLTLIHLTFLHESGSNNPLGIVSNCDKIPFHPYFTLKDILGFMFMLLPLTTLALFSPNLLGDPENFTPANPLITPPHIKPEWYFLFAYAILRSIPNKLGGVLALAASVLILFLVPFLHKAKQRTMTFRPLSQLLFWVLVANLLILTWVGSQPVEHPFIIIGQLASLTYFTILLILFPTIGALENKMLNY</sequence>
<reference key="1">
    <citation type="journal article" date="1998" name="Mol. Biol. Evol.">
        <title>Body size effects and rates of cytochrome-b evolution in tube-nosed seabirds.</title>
        <authorList>
            <person name="Nunn G.B."/>
            <person name="Stanley S.E."/>
        </authorList>
    </citation>
    <scope>NUCLEOTIDE SEQUENCE [GENOMIC DNA]</scope>
    <source>
        <strain>Isolate Bonin-1</strain>
    </source>
</reference>
<keyword id="KW-0249">Electron transport</keyword>
<keyword id="KW-0349">Heme</keyword>
<keyword id="KW-0408">Iron</keyword>
<keyword id="KW-0472">Membrane</keyword>
<keyword id="KW-0479">Metal-binding</keyword>
<keyword id="KW-0496">Mitochondrion</keyword>
<keyword id="KW-0999">Mitochondrion inner membrane</keyword>
<keyword id="KW-0679">Respiratory chain</keyword>
<keyword id="KW-0812">Transmembrane</keyword>
<keyword id="KW-1133">Transmembrane helix</keyword>
<keyword id="KW-0813">Transport</keyword>
<keyword id="KW-0830">Ubiquinone</keyword>
<dbReference type="EMBL" id="AF076079">
    <property type="protein sequence ID" value="AAC68636.1"/>
    <property type="molecule type" value="Genomic_DNA"/>
</dbReference>
<dbReference type="SMR" id="O79224"/>
<dbReference type="GO" id="GO:0005743">
    <property type="term" value="C:mitochondrial inner membrane"/>
    <property type="evidence" value="ECO:0007669"/>
    <property type="project" value="UniProtKB-SubCell"/>
</dbReference>
<dbReference type="GO" id="GO:0045275">
    <property type="term" value="C:respiratory chain complex III"/>
    <property type="evidence" value="ECO:0007669"/>
    <property type="project" value="InterPro"/>
</dbReference>
<dbReference type="GO" id="GO:0046872">
    <property type="term" value="F:metal ion binding"/>
    <property type="evidence" value="ECO:0007669"/>
    <property type="project" value="UniProtKB-KW"/>
</dbReference>
<dbReference type="GO" id="GO:0008121">
    <property type="term" value="F:ubiquinol-cytochrome-c reductase activity"/>
    <property type="evidence" value="ECO:0007669"/>
    <property type="project" value="InterPro"/>
</dbReference>
<dbReference type="GO" id="GO:0006122">
    <property type="term" value="P:mitochondrial electron transport, ubiquinol to cytochrome c"/>
    <property type="evidence" value="ECO:0007669"/>
    <property type="project" value="TreeGrafter"/>
</dbReference>
<dbReference type="CDD" id="cd00290">
    <property type="entry name" value="cytochrome_b_C"/>
    <property type="match status" value="1"/>
</dbReference>
<dbReference type="CDD" id="cd00284">
    <property type="entry name" value="Cytochrome_b_N"/>
    <property type="match status" value="1"/>
</dbReference>
<dbReference type="FunFam" id="1.20.810.10:FF:000002">
    <property type="entry name" value="Cytochrome b"/>
    <property type="match status" value="1"/>
</dbReference>
<dbReference type="Gene3D" id="1.20.810.10">
    <property type="entry name" value="Cytochrome Bc1 Complex, Chain C"/>
    <property type="match status" value="1"/>
</dbReference>
<dbReference type="InterPro" id="IPR005798">
    <property type="entry name" value="Cyt_b/b6_C"/>
</dbReference>
<dbReference type="InterPro" id="IPR036150">
    <property type="entry name" value="Cyt_b/b6_C_sf"/>
</dbReference>
<dbReference type="InterPro" id="IPR005797">
    <property type="entry name" value="Cyt_b/b6_N"/>
</dbReference>
<dbReference type="InterPro" id="IPR027387">
    <property type="entry name" value="Cytb/b6-like_sf"/>
</dbReference>
<dbReference type="InterPro" id="IPR030689">
    <property type="entry name" value="Cytochrome_b"/>
</dbReference>
<dbReference type="InterPro" id="IPR048260">
    <property type="entry name" value="Cytochrome_b_C_euk/bac"/>
</dbReference>
<dbReference type="InterPro" id="IPR048259">
    <property type="entry name" value="Cytochrome_b_N_euk/bac"/>
</dbReference>
<dbReference type="InterPro" id="IPR016174">
    <property type="entry name" value="Di-haem_cyt_TM"/>
</dbReference>
<dbReference type="PANTHER" id="PTHR19271">
    <property type="entry name" value="CYTOCHROME B"/>
    <property type="match status" value="1"/>
</dbReference>
<dbReference type="PANTHER" id="PTHR19271:SF16">
    <property type="entry name" value="CYTOCHROME B"/>
    <property type="match status" value="1"/>
</dbReference>
<dbReference type="Pfam" id="PF00032">
    <property type="entry name" value="Cytochrom_B_C"/>
    <property type="match status" value="1"/>
</dbReference>
<dbReference type="Pfam" id="PF00033">
    <property type="entry name" value="Cytochrome_B"/>
    <property type="match status" value="1"/>
</dbReference>
<dbReference type="PIRSF" id="PIRSF038885">
    <property type="entry name" value="COB"/>
    <property type="match status" value="1"/>
</dbReference>
<dbReference type="SUPFAM" id="SSF81648">
    <property type="entry name" value="a domain/subunit of cytochrome bc1 complex (Ubiquinol-cytochrome c reductase)"/>
    <property type="match status" value="1"/>
</dbReference>
<dbReference type="SUPFAM" id="SSF81342">
    <property type="entry name" value="Transmembrane di-heme cytochromes"/>
    <property type="match status" value="1"/>
</dbReference>
<dbReference type="PROSITE" id="PS51003">
    <property type="entry name" value="CYTB_CTER"/>
    <property type="match status" value="1"/>
</dbReference>
<dbReference type="PROSITE" id="PS51002">
    <property type="entry name" value="CYTB_NTER"/>
    <property type="match status" value="1"/>
</dbReference>